<evidence type="ECO:0000250" key="1">
    <source>
        <dbReference type="UniProtKB" id="Q9H9B4"/>
    </source>
</evidence>
<evidence type="ECO:0000255" key="2"/>
<evidence type="ECO:0000305" key="3"/>
<evidence type="ECO:0000312" key="4">
    <source>
        <dbReference type="WormBase" id="AH6.2"/>
    </source>
</evidence>
<feature type="chain" id="PRO_0000177046" description="Sideroflexin-1.1">
    <location>
        <begin position="1"/>
        <end position="329"/>
    </location>
</feature>
<feature type="transmembrane region" description="Helical" evidence="2">
    <location>
        <begin position="100"/>
        <end position="122"/>
    </location>
</feature>
<feature type="transmembrane region" description="Helical" evidence="2">
    <location>
        <begin position="150"/>
        <end position="167"/>
    </location>
</feature>
<feature type="transmembrane region" description="Helical" evidence="2">
    <location>
        <begin position="178"/>
        <end position="198"/>
    </location>
</feature>
<feature type="transmembrane region" description="Helical" evidence="2">
    <location>
        <begin position="232"/>
        <end position="254"/>
    </location>
</feature>
<feature type="transmembrane region" description="Helical" evidence="2">
    <location>
        <begin position="274"/>
        <end position="294"/>
    </location>
</feature>
<dbReference type="EMBL" id="Z48009">
    <property type="protein sequence ID" value="CAA88076.1"/>
    <property type="molecule type" value="Genomic_DNA"/>
</dbReference>
<dbReference type="PIR" id="T18612">
    <property type="entry name" value="T18612"/>
</dbReference>
<dbReference type="RefSeq" id="NP_496040.1">
    <property type="nucleotide sequence ID" value="NM_063639.4"/>
</dbReference>
<dbReference type="BioGRID" id="46677">
    <property type="interactions" value="2"/>
</dbReference>
<dbReference type="DIP" id="DIP-25194N"/>
<dbReference type="FunCoup" id="Q09201">
    <property type="interactions" value="251"/>
</dbReference>
<dbReference type="STRING" id="6239.AH6.2.1"/>
<dbReference type="TCDB" id="2.A.54.1.2">
    <property type="family name" value="the sideroflexin (sfxn) family (formerly the mitochondrial tricarboxylate carrier (mtc) family)"/>
</dbReference>
<dbReference type="PaxDb" id="6239-AH6.2"/>
<dbReference type="EnsemblMetazoa" id="AH6.2.1">
    <property type="protein sequence ID" value="AH6.2.1"/>
    <property type="gene ID" value="WBGene00007080"/>
</dbReference>
<dbReference type="GeneID" id="181807"/>
<dbReference type="KEGG" id="cel:CELE_AH6.2"/>
<dbReference type="AGR" id="WB:WBGene00007080"/>
<dbReference type="CTD" id="181807"/>
<dbReference type="WormBase" id="AH6.2">
    <property type="protein sequence ID" value="CE01456"/>
    <property type="gene ID" value="WBGene00007080"/>
    <property type="gene designation" value="sfxn-1.1"/>
</dbReference>
<dbReference type="eggNOG" id="KOG3767">
    <property type="taxonomic scope" value="Eukaryota"/>
</dbReference>
<dbReference type="GeneTree" id="ENSGT01030000234641"/>
<dbReference type="HOGENOM" id="CLU_039425_1_0_1"/>
<dbReference type="InParanoid" id="Q09201"/>
<dbReference type="OMA" id="HYWATAN"/>
<dbReference type="OrthoDB" id="6608471at2759"/>
<dbReference type="PhylomeDB" id="Q09201"/>
<dbReference type="PRO" id="PR:Q09201"/>
<dbReference type="Proteomes" id="UP000001940">
    <property type="component" value="Chromosome II"/>
</dbReference>
<dbReference type="Bgee" id="WBGene00007080">
    <property type="expression patterns" value="Expressed in material anatomical entity and 2 other cell types or tissues"/>
</dbReference>
<dbReference type="GO" id="GO:0005743">
    <property type="term" value="C:mitochondrial inner membrane"/>
    <property type="evidence" value="ECO:0000318"/>
    <property type="project" value="GO_Central"/>
</dbReference>
<dbReference type="GO" id="GO:0015075">
    <property type="term" value="F:monoatomic ion transmembrane transporter activity"/>
    <property type="evidence" value="ECO:0007669"/>
    <property type="project" value="InterPro"/>
</dbReference>
<dbReference type="GO" id="GO:0022857">
    <property type="term" value="F:transmembrane transporter activity"/>
    <property type="evidence" value="ECO:0000318"/>
    <property type="project" value="GO_Central"/>
</dbReference>
<dbReference type="GO" id="GO:0140300">
    <property type="term" value="P:serine import into mitochondrion"/>
    <property type="evidence" value="ECO:0000318"/>
    <property type="project" value="GO_Central"/>
</dbReference>
<dbReference type="InterPro" id="IPR004686">
    <property type="entry name" value="Mtc"/>
</dbReference>
<dbReference type="NCBIfam" id="TIGR00798">
    <property type="entry name" value="mtc"/>
    <property type="match status" value="1"/>
</dbReference>
<dbReference type="PANTHER" id="PTHR11153">
    <property type="entry name" value="SIDEROFLEXIN"/>
    <property type="match status" value="1"/>
</dbReference>
<dbReference type="PANTHER" id="PTHR11153:SF20">
    <property type="entry name" value="SIDEROFLEXIN-3"/>
    <property type="match status" value="1"/>
</dbReference>
<dbReference type="Pfam" id="PF03820">
    <property type="entry name" value="SFXNs"/>
    <property type="match status" value="1"/>
</dbReference>
<reference key="1">
    <citation type="journal article" date="1998" name="Science">
        <title>Genome sequence of the nematode C. elegans: a platform for investigating biology.</title>
        <authorList>
            <consortium name="The C. elegans sequencing consortium"/>
        </authorList>
    </citation>
    <scope>NUCLEOTIDE SEQUENCE [LARGE SCALE GENOMIC DNA]</scope>
    <source>
        <strain>Bristol N2</strain>
    </source>
</reference>
<name>SFXN1_CAEEL</name>
<accession>Q09201</accession>
<comment type="function">
    <text evidence="1">Amino acid transporter importing serine, an essential substrate of the mitochondrial branch of the one-carbon pathway, into mitochondria. Mitochondrial serine is then converted to glycine and formate, which exits to the cytosol where it is used to generate the charged folates that serve as one-carbon donors. May also transport other amino acids including alanine and cysteine.</text>
</comment>
<comment type="catalytic activity">
    <reaction evidence="1">
        <text>L-serine(in) = L-serine(out)</text>
        <dbReference type="Rhea" id="RHEA:35031"/>
        <dbReference type="ChEBI" id="CHEBI:33384"/>
    </reaction>
</comment>
<comment type="catalytic activity">
    <reaction evidence="1">
        <text>L-alanine(in) = L-alanine(out)</text>
        <dbReference type="Rhea" id="RHEA:70719"/>
        <dbReference type="ChEBI" id="CHEBI:57972"/>
    </reaction>
</comment>
<comment type="catalytic activity">
    <reaction evidence="1">
        <text>L-cysteine(in) = L-cysteine(out)</text>
        <dbReference type="Rhea" id="RHEA:29655"/>
        <dbReference type="ChEBI" id="CHEBI:35235"/>
    </reaction>
</comment>
<comment type="subcellular location">
    <subcellularLocation>
        <location evidence="1">Mitochondrion inner membrane</location>
        <topology evidence="2">Multi-pass membrane protein</topology>
    </subcellularLocation>
</comment>
<comment type="similarity">
    <text evidence="3">Belongs to the sideroflexin family.</text>
</comment>
<protein>
    <recommendedName>
        <fullName evidence="3">Sideroflexin-1.1</fullName>
    </recommendedName>
</protein>
<keyword id="KW-0029">Amino-acid transport</keyword>
<keyword id="KW-0472">Membrane</keyword>
<keyword id="KW-0496">Mitochondrion</keyword>
<keyword id="KW-0999">Mitochondrion inner membrane</keyword>
<keyword id="KW-1185">Reference proteome</keyword>
<keyword id="KW-0812">Transmembrane</keyword>
<keyword id="KW-1133">Transmembrane helix</keyword>
<keyword id="KW-0813">Transport</keyword>
<organism>
    <name type="scientific">Caenorhabditis elegans</name>
    <dbReference type="NCBI Taxonomy" id="6239"/>
    <lineage>
        <taxon>Eukaryota</taxon>
        <taxon>Metazoa</taxon>
        <taxon>Ecdysozoa</taxon>
        <taxon>Nematoda</taxon>
        <taxon>Chromadorea</taxon>
        <taxon>Rhabditida</taxon>
        <taxon>Rhabditina</taxon>
        <taxon>Rhabditomorpha</taxon>
        <taxon>Rhabditoidea</taxon>
        <taxon>Rhabditidae</taxon>
        <taxon>Peloderinae</taxon>
        <taxon>Caenorhabditis</taxon>
    </lineage>
</organism>
<sequence length="329" mass="36755">MNNLVVNQTVLPDISKPKWDQGTYAGRAKHFFSSTNPLTLFSSRIQQEKCKEIVTNYKTGVISPTLTVDELWKAKTLYDSTYHPDTGEKMFFLGRMSAQMPGNMVTTGMLLGLYRTLPGVVFSHWFNQSFNAVVNYTNRSGNSKATNERLFVSYCCATSGAMTVALGLNKMVKNSHGLAARLVPFAAIALANAINIPMMRSNEASEGMELKDENDQLVGKSQKMAALSIAQVTLSRIAMAMPYMVMTPIIMNRITRTAYYRTRPWMQKYSEIPIQTLIAGIGLYFTTPLCCALFPQKSSVEVEKLESSVQKEIMSRPNPPKIVYYNKGL</sequence>
<gene>
    <name evidence="4" type="primary">sfxn-1.1</name>
    <name type="ORF">AH6.2</name>
</gene>
<proteinExistence type="inferred from homology"/>